<comment type="function">
    <text evidence="1">DNA-dependent RNA polymerase catalyzes the transcription of DNA into RNA using the four ribonucleoside triphosphates as substrates.</text>
</comment>
<comment type="catalytic activity">
    <reaction evidence="1">
        <text>RNA(n) + a ribonucleoside 5'-triphosphate = RNA(n+1) + diphosphate</text>
        <dbReference type="Rhea" id="RHEA:21248"/>
        <dbReference type="Rhea" id="RHEA-COMP:14527"/>
        <dbReference type="Rhea" id="RHEA-COMP:17342"/>
        <dbReference type="ChEBI" id="CHEBI:33019"/>
        <dbReference type="ChEBI" id="CHEBI:61557"/>
        <dbReference type="ChEBI" id="CHEBI:140395"/>
        <dbReference type="EC" id="2.7.7.6"/>
    </reaction>
</comment>
<comment type="subunit">
    <text evidence="1">In cyanobacteria the RNAP catalytic core is composed of 2 alpha, 1 beta, 1 beta', 1 gamma and 1 omega subunit. When a sigma factor is associated with the core the holoenzyme is formed, which can initiate transcription.</text>
</comment>
<comment type="domain">
    <text evidence="1">The N-terminal domain is essential for RNAP assembly and basal transcription, whereas the C-terminal domain is involved in interaction with transcriptional regulators and with upstream promoter elements.</text>
</comment>
<comment type="similarity">
    <text evidence="1">Belongs to the RNA polymerase alpha chain family.</text>
</comment>
<organism>
    <name type="scientific">Gloeobacter violaceus (strain ATCC 29082 / PCC 7421)</name>
    <dbReference type="NCBI Taxonomy" id="251221"/>
    <lineage>
        <taxon>Bacteria</taxon>
        <taxon>Bacillati</taxon>
        <taxon>Cyanobacteriota</taxon>
        <taxon>Cyanophyceae</taxon>
        <taxon>Gloeobacterales</taxon>
        <taxon>Gloeobacteraceae</taxon>
        <taxon>Gloeobacter</taxon>
    </lineage>
</organism>
<gene>
    <name evidence="1" type="primary">rpoA</name>
    <name type="ordered locus">gll3571</name>
</gene>
<accession>Q7NFF5</accession>
<evidence type="ECO:0000255" key="1">
    <source>
        <dbReference type="HAMAP-Rule" id="MF_00059"/>
    </source>
</evidence>
<name>RPOA_GLOVI</name>
<proteinExistence type="inferred from homology"/>
<protein>
    <recommendedName>
        <fullName evidence="1">DNA-directed RNA polymerase subunit alpha</fullName>
        <shortName evidence="1">RNAP subunit alpha</shortName>
        <ecNumber evidence="1">2.7.7.6</ecNumber>
    </recommendedName>
    <alternativeName>
        <fullName evidence="1">RNA polymerase subunit alpha</fullName>
    </alternativeName>
    <alternativeName>
        <fullName evidence="1">Transcriptase subunit alpha</fullName>
    </alternativeName>
</protein>
<feature type="chain" id="PRO_0000175312" description="DNA-directed RNA polymerase subunit alpha">
    <location>
        <begin position="1"/>
        <end position="314"/>
    </location>
</feature>
<feature type="region of interest" description="Alpha N-terminal domain (alpha-NTD)" evidence="1">
    <location>
        <begin position="1"/>
        <end position="228"/>
    </location>
</feature>
<feature type="region of interest" description="Alpha C-terminal domain (alpha-CTD)" evidence="1">
    <location>
        <begin position="241"/>
        <end position="314"/>
    </location>
</feature>
<keyword id="KW-0240">DNA-directed RNA polymerase</keyword>
<keyword id="KW-0548">Nucleotidyltransferase</keyword>
<keyword id="KW-1185">Reference proteome</keyword>
<keyword id="KW-0804">Transcription</keyword>
<keyword id="KW-0808">Transferase</keyword>
<dbReference type="EC" id="2.7.7.6" evidence="1"/>
<dbReference type="EMBL" id="BA000045">
    <property type="protein sequence ID" value="BAC91512.1"/>
    <property type="molecule type" value="Genomic_DNA"/>
</dbReference>
<dbReference type="RefSeq" id="NP_926517.1">
    <property type="nucleotide sequence ID" value="NC_005125.1"/>
</dbReference>
<dbReference type="RefSeq" id="WP_011143560.1">
    <property type="nucleotide sequence ID" value="NC_005125.1"/>
</dbReference>
<dbReference type="SMR" id="Q7NFF5"/>
<dbReference type="FunCoup" id="Q7NFF5">
    <property type="interactions" value="139"/>
</dbReference>
<dbReference type="STRING" id="251221.gene:10761086"/>
<dbReference type="EnsemblBacteria" id="BAC91512">
    <property type="protein sequence ID" value="BAC91512"/>
    <property type="gene ID" value="BAC91512"/>
</dbReference>
<dbReference type="KEGG" id="gvi:gll3571"/>
<dbReference type="PATRIC" id="fig|251221.4.peg.3604"/>
<dbReference type="eggNOG" id="COG0202">
    <property type="taxonomic scope" value="Bacteria"/>
</dbReference>
<dbReference type="HOGENOM" id="CLU_053084_0_1_3"/>
<dbReference type="InParanoid" id="Q7NFF5"/>
<dbReference type="OrthoDB" id="9805706at2"/>
<dbReference type="PhylomeDB" id="Q7NFF5"/>
<dbReference type="Proteomes" id="UP000000557">
    <property type="component" value="Chromosome"/>
</dbReference>
<dbReference type="GO" id="GO:0005737">
    <property type="term" value="C:cytoplasm"/>
    <property type="evidence" value="ECO:0000318"/>
    <property type="project" value="GO_Central"/>
</dbReference>
<dbReference type="GO" id="GO:0000428">
    <property type="term" value="C:DNA-directed RNA polymerase complex"/>
    <property type="evidence" value="ECO:0007669"/>
    <property type="project" value="UniProtKB-KW"/>
</dbReference>
<dbReference type="GO" id="GO:0003677">
    <property type="term" value="F:DNA binding"/>
    <property type="evidence" value="ECO:0007669"/>
    <property type="project" value="UniProtKB-UniRule"/>
</dbReference>
<dbReference type="GO" id="GO:0003899">
    <property type="term" value="F:DNA-directed RNA polymerase activity"/>
    <property type="evidence" value="ECO:0007669"/>
    <property type="project" value="UniProtKB-UniRule"/>
</dbReference>
<dbReference type="GO" id="GO:0046983">
    <property type="term" value="F:protein dimerization activity"/>
    <property type="evidence" value="ECO:0007669"/>
    <property type="project" value="InterPro"/>
</dbReference>
<dbReference type="GO" id="GO:0006351">
    <property type="term" value="P:DNA-templated transcription"/>
    <property type="evidence" value="ECO:0007669"/>
    <property type="project" value="UniProtKB-UniRule"/>
</dbReference>
<dbReference type="CDD" id="cd06928">
    <property type="entry name" value="RNAP_alpha_NTD"/>
    <property type="match status" value="1"/>
</dbReference>
<dbReference type="FunFam" id="1.10.150.20:FF:000120">
    <property type="entry name" value="DNA-directed RNA polymerase subunit alpha"/>
    <property type="match status" value="1"/>
</dbReference>
<dbReference type="FunFam" id="2.170.120.12:FF:000001">
    <property type="entry name" value="DNA-directed RNA polymerase subunit alpha"/>
    <property type="match status" value="1"/>
</dbReference>
<dbReference type="Gene3D" id="1.10.150.20">
    <property type="entry name" value="5' to 3' exonuclease, C-terminal subdomain"/>
    <property type="match status" value="1"/>
</dbReference>
<dbReference type="Gene3D" id="2.170.120.12">
    <property type="entry name" value="DNA-directed RNA polymerase, insert domain"/>
    <property type="match status" value="1"/>
</dbReference>
<dbReference type="Gene3D" id="3.30.1360.10">
    <property type="entry name" value="RNA polymerase, RBP11-like subunit"/>
    <property type="match status" value="1"/>
</dbReference>
<dbReference type="HAMAP" id="MF_00059">
    <property type="entry name" value="RNApol_bact_RpoA"/>
    <property type="match status" value="1"/>
</dbReference>
<dbReference type="InterPro" id="IPR011262">
    <property type="entry name" value="DNA-dir_RNA_pol_insert"/>
</dbReference>
<dbReference type="InterPro" id="IPR011263">
    <property type="entry name" value="DNA-dir_RNA_pol_RpoA/D/Rpb3"/>
</dbReference>
<dbReference type="InterPro" id="IPR011773">
    <property type="entry name" value="DNA-dir_RpoA"/>
</dbReference>
<dbReference type="InterPro" id="IPR036603">
    <property type="entry name" value="RBP11-like"/>
</dbReference>
<dbReference type="InterPro" id="IPR011260">
    <property type="entry name" value="RNAP_asu_C"/>
</dbReference>
<dbReference type="InterPro" id="IPR036643">
    <property type="entry name" value="RNApol_insert_sf"/>
</dbReference>
<dbReference type="NCBIfam" id="NF003513">
    <property type="entry name" value="PRK05182.1-2"/>
    <property type="match status" value="1"/>
</dbReference>
<dbReference type="NCBIfam" id="NF003516">
    <property type="entry name" value="PRK05182.2-2"/>
    <property type="match status" value="1"/>
</dbReference>
<dbReference type="NCBIfam" id="NF003519">
    <property type="entry name" value="PRK05182.2-5"/>
    <property type="match status" value="1"/>
</dbReference>
<dbReference type="NCBIfam" id="TIGR02027">
    <property type="entry name" value="rpoA"/>
    <property type="match status" value="1"/>
</dbReference>
<dbReference type="Pfam" id="PF01000">
    <property type="entry name" value="RNA_pol_A_bac"/>
    <property type="match status" value="1"/>
</dbReference>
<dbReference type="Pfam" id="PF03118">
    <property type="entry name" value="RNA_pol_A_CTD"/>
    <property type="match status" value="1"/>
</dbReference>
<dbReference type="Pfam" id="PF01193">
    <property type="entry name" value="RNA_pol_L"/>
    <property type="match status" value="1"/>
</dbReference>
<dbReference type="SMART" id="SM00662">
    <property type="entry name" value="RPOLD"/>
    <property type="match status" value="1"/>
</dbReference>
<dbReference type="SUPFAM" id="SSF47789">
    <property type="entry name" value="C-terminal domain of RNA polymerase alpha subunit"/>
    <property type="match status" value="1"/>
</dbReference>
<dbReference type="SUPFAM" id="SSF56553">
    <property type="entry name" value="Insert subdomain of RNA polymerase alpha subunit"/>
    <property type="match status" value="1"/>
</dbReference>
<dbReference type="SUPFAM" id="SSF55257">
    <property type="entry name" value="RBP11-like subunits of RNA polymerase"/>
    <property type="match status" value="1"/>
</dbReference>
<reference key="1">
    <citation type="journal article" date="2003" name="DNA Res.">
        <title>Complete genome structure of Gloeobacter violaceus PCC 7421, a cyanobacterium that lacks thylakoids.</title>
        <authorList>
            <person name="Nakamura Y."/>
            <person name="Kaneko T."/>
            <person name="Sato S."/>
            <person name="Mimuro M."/>
            <person name="Miyashita H."/>
            <person name="Tsuchiya T."/>
            <person name="Sasamoto S."/>
            <person name="Watanabe A."/>
            <person name="Kawashima K."/>
            <person name="Kishida Y."/>
            <person name="Kiyokawa C."/>
            <person name="Kohara M."/>
            <person name="Matsumoto M."/>
            <person name="Matsuno A."/>
            <person name="Nakazaki N."/>
            <person name="Shimpo S."/>
            <person name="Takeuchi C."/>
            <person name="Yamada M."/>
            <person name="Tabata S."/>
        </authorList>
    </citation>
    <scope>NUCLEOTIDE SEQUENCE [LARGE SCALE GENOMIC DNA]</scope>
    <source>
        <strain>ATCC 29082 / PCC 7421</strain>
    </source>
</reference>
<sequence length="314" mass="34976">MAQYTIECVETRTEADNGQYGKFVLEPLERGQGTTLGNALRRVLLSNLEGTAVTAVRITGVNHEFATMKGIREDVLDILLNMKELVLRSYTSDIQIGRLAVQGPKRVTAADLELPTEVQVVHPRHYIATLAEDGQLEMEFQIERGKGYRAIERGSEDGAAIDYLSIDAIFMPVRKVNWTVESERSAANVEQDRLTLEIWTSGSLSPQEALSQAAKILVDQLRPLQEITFEPPAEPQRSAPNTVGQVPIEELQLSVRAYNCLKRAQINTVADLLEYTEEDLLEIKNFGQKSAEEVIEALQDKMGLSLPKDKPARS</sequence>